<evidence type="ECO:0000255" key="1"/>
<evidence type="ECO:0000305" key="2"/>
<dbReference type="EMBL" id="X60828">
    <property type="protein sequence ID" value="CAA43220.1"/>
    <property type="molecule type" value="Genomic_DNA"/>
</dbReference>
<dbReference type="PIR" id="S23743">
    <property type="entry name" value="S23743"/>
</dbReference>
<dbReference type="RefSeq" id="WP_032488409.1">
    <property type="nucleotide sequence ID" value="NG_048205.1"/>
</dbReference>
<dbReference type="SMR" id="P36890"/>
<dbReference type="GO" id="GO:0005886">
    <property type="term" value="C:plasma membrane"/>
    <property type="evidence" value="ECO:0007669"/>
    <property type="project" value="UniProtKB-SubCell"/>
</dbReference>
<dbReference type="GO" id="GO:0015297">
    <property type="term" value="F:antiporter activity"/>
    <property type="evidence" value="ECO:0007669"/>
    <property type="project" value="UniProtKB-KW"/>
</dbReference>
<dbReference type="GO" id="GO:1902600">
    <property type="term" value="P:proton transmembrane transport"/>
    <property type="evidence" value="ECO:0007669"/>
    <property type="project" value="UniProtKB-KW"/>
</dbReference>
<dbReference type="GO" id="GO:0046677">
    <property type="term" value="P:response to antibiotic"/>
    <property type="evidence" value="ECO:0007669"/>
    <property type="project" value="UniProtKB-KW"/>
</dbReference>
<dbReference type="CDD" id="cd17321">
    <property type="entry name" value="MFS_MMR_MDR_like"/>
    <property type="match status" value="1"/>
</dbReference>
<dbReference type="Gene3D" id="1.20.1250.20">
    <property type="entry name" value="MFS general substrate transporter like domains"/>
    <property type="match status" value="1"/>
</dbReference>
<dbReference type="Gene3D" id="1.20.1720.10">
    <property type="entry name" value="Multidrug resistance protein D"/>
    <property type="match status" value="1"/>
</dbReference>
<dbReference type="InterPro" id="IPR011701">
    <property type="entry name" value="MFS"/>
</dbReference>
<dbReference type="InterPro" id="IPR020846">
    <property type="entry name" value="MFS_dom"/>
</dbReference>
<dbReference type="InterPro" id="IPR036259">
    <property type="entry name" value="MFS_trans_sf"/>
</dbReference>
<dbReference type="NCBIfam" id="NF012185">
    <property type="entry name" value="tet_MFS_L"/>
    <property type="match status" value="1"/>
</dbReference>
<dbReference type="NCBIfam" id="NF012175">
    <property type="entry name" value="tet_MFS_L_K_45"/>
    <property type="match status" value="1"/>
</dbReference>
<dbReference type="PANTHER" id="PTHR23501">
    <property type="entry name" value="MAJOR FACILITATOR SUPERFAMILY"/>
    <property type="match status" value="1"/>
</dbReference>
<dbReference type="PANTHER" id="PTHR23501:SF188">
    <property type="entry name" value="TETRACYCLINE RESISTANCE PROTEIN"/>
    <property type="match status" value="1"/>
</dbReference>
<dbReference type="Pfam" id="PF07690">
    <property type="entry name" value="MFS_1"/>
    <property type="match status" value="1"/>
</dbReference>
<dbReference type="PRINTS" id="PR01036">
    <property type="entry name" value="TCRTETB"/>
</dbReference>
<dbReference type="SUPFAM" id="SSF103473">
    <property type="entry name" value="MFS general substrate transporter"/>
    <property type="match status" value="1"/>
</dbReference>
<dbReference type="PROSITE" id="PS50850">
    <property type="entry name" value="MFS"/>
    <property type="match status" value="1"/>
</dbReference>
<reference key="1">
    <citation type="journal article" date="1992" name="Antimicrob. Agents Chemother.">
        <title>Nucleotide sequence and phylogeny of the tet(L) tetracycline resistance determinant encoded by plasmid pSTE1 from Staphylococcus hyicus.</title>
        <authorList>
            <person name="Schwarz S."/>
            <person name="Cardoso M."/>
            <person name="Wegener H.C."/>
        </authorList>
    </citation>
    <scope>NUCLEOTIDE SEQUENCE [GENOMIC DNA]</scope>
</reference>
<geneLocation type="plasmid">
    <name>pSTE1</name>
</geneLocation>
<sequence length="458" mass="49954">MNTSYSQSNLRHNQILIWLCILSFFSVLNEMVLNVSLPDIANDFNKPPASTNWVNTAFMLTFSIGTAVYGKLSDQLGIKRLLLFGIIINCFGSVIGFVGHSFFSLLIMARFIQGAGAAAFPALVMVVVARYIPKENRGKAFGLIGSIVAMGEGVGPAIGGMIAHYIHWSYLLLIPIITIITVPFLMKLLKKEVRIKGHFGSKGIILMSVGIVFFMLFTTSYSISFLIVSVLSFLIFVKHIRKVTDPFVDPGLGKNIPFMIGVLCGGIIFGTVAGFVSMVPYMMKDVHQLSTAEIGSVIIFPGTMSVIIFGYIGGILVDRRVPLYALNIGVTFLSVSFLTASFLLETTSWFMTIIIVFVLGGLSFTKTVISTIVSSSLKQQEAGAGMSLLNFTSLLSEGTGIAIVGGLLSIPLLDPRLLPMEVDQSTYLYSNLLLLFSGIIVISWLVTLNLYKHSQRDF</sequence>
<keyword id="KW-0046">Antibiotic resistance</keyword>
<keyword id="KW-0050">Antiport</keyword>
<keyword id="KW-1003">Cell membrane</keyword>
<keyword id="KW-0375">Hydrogen ion transport</keyword>
<keyword id="KW-0406">Ion transport</keyword>
<keyword id="KW-0472">Membrane</keyword>
<keyword id="KW-0614">Plasmid</keyword>
<keyword id="KW-0812">Transmembrane</keyword>
<keyword id="KW-1133">Transmembrane helix</keyword>
<keyword id="KW-0813">Transport</keyword>
<comment type="function">
    <text>Resistance to tetracycline by an active tetracycline efflux. This is an energy-dependent process that decreases the accumulation of the antibiotic in whole cells. This protein functions as a metal-tetracycline/H(+) antiporter.</text>
</comment>
<comment type="subcellular location">
    <subcellularLocation>
        <location>Cell membrane</location>
        <topology>Multi-pass membrane protein</topology>
    </subcellularLocation>
</comment>
<comment type="similarity">
    <text evidence="2">Belongs to the major facilitator superfamily. TCR/Tet family.</text>
</comment>
<proteinExistence type="inferred from homology"/>
<feature type="chain" id="PRO_0000173387" description="Tetracycline resistance protein">
    <location>
        <begin position="1"/>
        <end position="458"/>
    </location>
</feature>
<feature type="transmembrane region" description="Helical" evidence="1">
    <location>
        <begin position="12"/>
        <end position="33"/>
    </location>
</feature>
<feature type="transmembrane region" description="Helical" evidence="1">
    <location>
        <begin position="81"/>
        <end position="100"/>
    </location>
</feature>
<feature type="transmembrane region" description="Helical" evidence="1">
    <location>
        <begin position="111"/>
        <end position="129"/>
    </location>
</feature>
<feature type="transmembrane region" description="Helical" evidence="1">
    <location>
        <begin position="140"/>
        <end position="162"/>
    </location>
</feature>
<feature type="transmembrane region" description="Helical" evidence="1">
    <location>
        <begin position="165"/>
        <end position="185"/>
    </location>
</feature>
<feature type="transmembrane region" description="Helical" evidence="1">
    <location>
        <begin position="201"/>
        <end position="221"/>
    </location>
</feature>
<feature type="transmembrane region" description="Helical" evidence="1">
    <location>
        <begin position="223"/>
        <end position="240"/>
    </location>
</feature>
<feature type="transmembrane region" description="Helical" evidence="1">
    <location>
        <begin position="256"/>
        <end position="276"/>
    </location>
</feature>
<feature type="transmembrane region" description="Helical" evidence="1">
    <location>
        <begin position="297"/>
        <end position="317"/>
    </location>
</feature>
<feature type="transmembrane region" description="Helical" evidence="1">
    <location>
        <begin position="324"/>
        <end position="344"/>
    </location>
</feature>
<feature type="transmembrane region" description="Helical" evidence="1">
    <location>
        <begin position="346"/>
        <end position="365"/>
    </location>
</feature>
<feature type="transmembrane region" description="Helical" evidence="1">
    <location>
        <begin position="432"/>
        <end position="451"/>
    </location>
</feature>
<organism>
    <name type="scientific">Staphylococcus hyicus</name>
    <dbReference type="NCBI Taxonomy" id="1284"/>
    <lineage>
        <taxon>Bacteria</taxon>
        <taxon>Bacillati</taxon>
        <taxon>Bacillota</taxon>
        <taxon>Bacilli</taxon>
        <taxon>Bacillales</taxon>
        <taxon>Staphylococcaceae</taxon>
        <taxon>Staphylococcus</taxon>
    </lineage>
</organism>
<gene>
    <name type="primary">tet</name>
</gene>
<name>TCR_STAHY</name>
<accession>P36890</accession>
<protein>
    <recommendedName>
        <fullName>Tetracycline resistance protein</fullName>
    </recommendedName>
</protein>